<organism>
    <name type="scientific">Arthroderma benhamiae (strain ATCC MYA-4681 / CBS 112371)</name>
    <name type="common">Trichophyton mentagrophytes</name>
    <dbReference type="NCBI Taxonomy" id="663331"/>
    <lineage>
        <taxon>Eukaryota</taxon>
        <taxon>Fungi</taxon>
        <taxon>Dikarya</taxon>
        <taxon>Ascomycota</taxon>
        <taxon>Pezizomycotina</taxon>
        <taxon>Eurotiomycetes</taxon>
        <taxon>Eurotiomycetidae</taxon>
        <taxon>Onygenales</taxon>
        <taxon>Arthrodermataceae</taxon>
        <taxon>Trichophyton</taxon>
    </lineage>
</organism>
<comment type="function">
    <text evidence="1">Beta-hexosaminidase that shows a broad substrate specificity (By similarity).</text>
</comment>
<comment type="catalytic activity">
    <reaction evidence="1">
        <text>Hydrolysis of terminal non-reducing N-acetyl-D-hexosamine residues in N-acetyl-beta-D-hexosaminides.</text>
        <dbReference type="EC" id="3.2.1.52"/>
    </reaction>
</comment>
<comment type="subcellular location">
    <subcellularLocation>
        <location evidence="6">Secreted</location>
    </subcellularLocation>
</comment>
<comment type="similarity">
    <text evidence="7">Belongs to the glycosyl hydrolase 20 family.</text>
</comment>
<gene>
    <name type="ORF">ARB_07893</name>
</gene>
<sequence length="605" mass="68518">MLWIWVPGILGLFGRVEALWPQPSEYSHGNKTLWLSPSVRFTYTNNQRSFIYTRPSYAGINWIPGGWLNLLQNPWGSAEQTVAEPLPNVEQFVEDAIKRTKHAIINSKFVPWKFHPRHQKFEPLVDGQHPTIEEVIINEASKTSQEWSPRNYVNGDEKYEIRISEDGEVQISSRSPIGTIRALQTFQQLFYSHSHSKSYTPFAPISISDSPKWRHRGLNLDISRNVIRPEDVKRTIDAMASVKLNRLHAHAADSQSWPLDIPSIPELAAKASYHPSQVWSSSELEAVQLYGLERGVSVFLEIDLPGHTAAVGHAFPDLVAAYHMDQWEKYAAEPPSGQIKLNSSAVYQFLDLLMADLIPRVSPLTEYFHTGGDEFNLNTYLLEINLGSNDRRVLTPFLDRMITHVHSSLRSSGVTPIVWEELVLDWDLNLPSHKTAGETGGVIVQAWRNSSAVKHVLQKGYQTIFGTGDAWYLDCGVGTFLNPRPGSKAVQNPYLDWCAPTKNWKHMYVYNPLKDIPVELQSLLVGGETHMWSELVDPVNMDQMIWPRAAAAAEVLWTGPRSPDNIQDASYRLAKWRERVVNDAGIRAAMVQMTYCLMRESGCEL</sequence>
<reference key="1">
    <citation type="journal article" date="2011" name="Genome Biol.">
        <title>Comparative and functional genomics provide insights into the pathogenicity of dermatophytic fungi.</title>
        <authorList>
            <person name="Burmester A."/>
            <person name="Shelest E."/>
            <person name="Gloeckner G."/>
            <person name="Heddergott C."/>
            <person name="Schindler S."/>
            <person name="Staib P."/>
            <person name="Heidel A."/>
            <person name="Felder M."/>
            <person name="Petzold A."/>
            <person name="Szafranski K."/>
            <person name="Feuermann M."/>
            <person name="Pedruzzi I."/>
            <person name="Priebe S."/>
            <person name="Groth M."/>
            <person name="Winkler R."/>
            <person name="Li W."/>
            <person name="Kniemeyer O."/>
            <person name="Schroeckh V."/>
            <person name="Hertweck C."/>
            <person name="Hube B."/>
            <person name="White T.C."/>
            <person name="Platzer M."/>
            <person name="Guthke R."/>
            <person name="Heitman J."/>
            <person name="Woestemeyer J."/>
            <person name="Zipfel P.F."/>
            <person name="Monod M."/>
            <person name="Brakhage A.A."/>
        </authorList>
    </citation>
    <scope>NUCLEOTIDE SEQUENCE [LARGE SCALE GENOMIC DNA]</scope>
    <source>
        <strain>ATCC MYA-4681 / CBS 112371</strain>
    </source>
</reference>
<reference key="2">
    <citation type="journal article" date="2011" name="Proteomics">
        <title>Identification of novel secreted proteases during extracellular proteolysis by dermatophytes at acidic pH.</title>
        <authorList>
            <person name="Sriranganadane D."/>
            <person name="Waridel P."/>
            <person name="Salamin K."/>
            <person name="Feuermann M."/>
            <person name="Mignon B."/>
            <person name="Staib P."/>
            <person name="Neuhaus J.M."/>
            <person name="Quadroni M."/>
            <person name="Monod M."/>
        </authorList>
    </citation>
    <scope>IDENTIFICATION BY MASS SPECTROMETRY</scope>
    <scope>SUBCELLULAR LOCATION</scope>
</reference>
<evidence type="ECO:0000250" key="1">
    <source>
        <dbReference type="UniProtKB" id="E9DFH0"/>
    </source>
</evidence>
<evidence type="ECO:0000250" key="2">
    <source>
        <dbReference type="UniProtKB" id="Q06135"/>
    </source>
</evidence>
<evidence type="ECO:0000255" key="3"/>
<evidence type="ECO:0000255" key="4">
    <source>
        <dbReference type="PIRSR" id="PIRSR001093-1"/>
    </source>
</evidence>
<evidence type="ECO:0000255" key="5">
    <source>
        <dbReference type="PROSITE-ProRule" id="PRU00498"/>
    </source>
</evidence>
<evidence type="ECO:0000269" key="6">
    <source>
    </source>
</evidence>
<evidence type="ECO:0000305" key="7"/>
<feature type="signal peptide" evidence="3">
    <location>
        <begin position="1"/>
        <end position="18"/>
    </location>
</feature>
<feature type="chain" id="PRO_0000434663" description="Beta-hexosaminidase ARB_07893" evidence="3">
    <location>
        <begin position="19"/>
        <end position="605"/>
    </location>
</feature>
<feature type="active site" description="Nucleophile" evidence="2">
    <location>
        <position position="293"/>
    </location>
</feature>
<feature type="active site" description="Proton donor" evidence="4">
    <location>
        <position position="374"/>
    </location>
</feature>
<feature type="glycosylation site" description="N-linked (GlcNAc...) asparagine" evidence="5">
    <location>
        <position position="30"/>
    </location>
</feature>
<feature type="glycosylation site" description="N-linked (GlcNAc...) asparagine" evidence="5">
    <location>
        <position position="342"/>
    </location>
</feature>
<feature type="glycosylation site" description="N-linked (GlcNAc...) asparagine" evidence="5">
    <location>
        <position position="449"/>
    </location>
</feature>
<protein>
    <recommendedName>
        <fullName evidence="7">Beta-hexosaminidase ARB_07893</fullName>
        <ecNumber>3.2.1.52</ecNumber>
    </recommendedName>
    <alternativeName>
        <fullName evidence="7">Beta-GlcNAcase ARB_07893</fullName>
    </alternativeName>
    <alternativeName>
        <fullName evidence="7">Beta-N-acetylhexosaminidase ARB_07893</fullName>
    </alternativeName>
    <alternativeName>
        <fullName evidence="7">N-acetyl-beta-glucosaminidase ARB_07893</fullName>
    </alternativeName>
</protein>
<keyword id="KW-0325">Glycoprotein</keyword>
<keyword id="KW-0326">Glycosidase</keyword>
<keyword id="KW-0378">Hydrolase</keyword>
<keyword id="KW-1185">Reference proteome</keyword>
<keyword id="KW-0964">Secreted</keyword>
<keyword id="KW-0732">Signal</keyword>
<accession>D4AUH6</accession>
<proteinExistence type="evidence at protein level"/>
<name>HEX1_ARTBC</name>
<dbReference type="EC" id="3.2.1.52"/>
<dbReference type="EMBL" id="ABSU01000011">
    <property type="protein sequence ID" value="EFE33141.1"/>
    <property type="molecule type" value="Genomic_DNA"/>
</dbReference>
<dbReference type="RefSeq" id="XP_003013781.1">
    <property type="nucleotide sequence ID" value="XM_003013735.1"/>
</dbReference>
<dbReference type="SMR" id="D4AUH6"/>
<dbReference type="STRING" id="663331.D4AUH6"/>
<dbReference type="GeneID" id="9526972"/>
<dbReference type="KEGG" id="abe:ARB_07893"/>
<dbReference type="eggNOG" id="KOG2499">
    <property type="taxonomic scope" value="Eukaryota"/>
</dbReference>
<dbReference type="HOGENOM" id="CLU_007082_0_2_1"/>
<dbReference type="OMA" id="GHDVVMC"/>
<dbReference type="OrthoDB" id="428480at2759"/>
<dbReference type="Proteomes" id="UP000008866">
    <property type="component" value="Unassembled WGS sequence"/>
</dbReference>
<dbReference type="GO" id="GO:0005576">
    <property type="term" value="C:extracellular region"/>
    <property type="evidence" value="ECO:0007669"/>
    <property type="project" value="UniProtKB-SubCell"/>
</dbReference>
<dbReference type="GO" id="GO:0016020">
    <property type="term" value="C:membrane"/>
    <property type="evidence" value="ECO:0007669"/>
    <property type="project" value="TreeGrafter"/>
</dbReference>
<dbReference type="GO" id="GO:0016231">
    <property type="term" value="F:beta-N-acetylglucosaminidase activity"/>
    <property type="evidence" value="ECO:0007669"/>
    <property type="project" value="TreeGrafter"/>
</dbReference>
<dbReference type="GO" id="GO:0005975">
    <property type="term" value="P:carbohydrate metabolic process"/>
    <property type="evidence" value="ECO:0007669"/>
    <property type="project" value="InterPro"/>
</dbReference>
<dbReference type="GO" id="GO:0030203">
    <property type="term" value="P:glycosaminoglycan metabolic process"/>
    <property type="evidence" value="ECO:0007669"/>
    <property type="project" value="TreeGrafter"/>
</dbReference>
<dbReference type="FunFam" id="3.20.20.80:FF:000063">
    <property type="entry name" value="Beta-hexosaminidase"/>
    <property type="match status" value="1"/>
</dbReference>
<dbReference type="Gene3D" id="3.30.379.10">
    <property type="entry name" value="Chitobiase/beta-hexosaminidase domain 2-like"/>
    <property type="match status" value="1"/>
</dbReference>
<dbReference type="Gene3D" id="3.20.20.80">
    <property type="entry name" value="Glycosidases"/>
    <property type="match status" value="1"/>
</dbReference>
<dbReference type="InterPro" id="IPR025705">
    <property type="entry name" value="Beta_hexosaminidase_sua/sub"/>
</dbReference>
<dbReference type="InterPro" id="IPR015883">
    <property type="entry name" value="Glyco_hydro_20_cat"/>
</dbReference>
<dbReference type="InterPro" id="IPR017853">
    <property type="entry name" value="Glycoside_hydrolase_SF"/>
</dbReference>
<dbReference type="InterPro" id="IPR029018">
    <property type="entry name" value="Hex-like_dom2"/>
</dbReference>
<dbReference type="InterPro" id="IPR029019">
    <property type="entry name" value="HEX_eukaryotic_N"/>
</dbReference>
<dbReference type="PANTHER" id="PTHR22600">
    <property type="entry name" value="BETA-HEXOSAMINIDASE"/>
    <property type="match status" value="1"/>
</dbReference>
<dbReference type="PANTHER" id="PTHR22600:SF58">
    <property type="entry name" value="BETA-HEXOSAMINIDASE"/>
    <property type="match status" value="1"/>
</dbReference>
<dbReference type="Pfam" id="PF00728">
    <property type="entry name" value="Glyco_hydro_20"/>
    <property type="match status" value="1"/>
</dbReference>
<dbReference type="Pfam" id="PF14845">
    <property type="entry name" value="Glycohydro_20b2"/>
    <property type="match status" value="1"/>
</dbReference>
<dbReference type="PIRSF" id="PIRSF001093">
    <property type="entry name" value="B-hxosamndse_ab_euk"/>
    <property type="match status" value="1"/>
</dbReference>
<dbReference type="PRINTS" id="PR00738">
    <property type="entry name" value="GLHYDRLASE20"/>
</dbReference>
<dbReference type="SUPFAM" id="SSF51445">
    <property type="entry name" value="(Trans)glycosidases"/>
    <property type="match status" value="1"/>
</dbReference>
<dbReference type="SUPFAM" id="SSF55545">
    <property type="entry name" value="beta-N-acetylhexosaminidase-like domain"/>
    <property type="match status" value="1"/>
</dbReference>